<sequence>MGHLELLLVENFKSWRGRQVIGPFKRFTCIIGPNGSGKSNVMDALSFVMGEKTTNLRVKNIQELIHGAHTGKPVSSSASVTIIYIEDSGEEKTFTRIIRGGCSEYHFGDKPVSRSVYVAQLENIGIIVKAQNCLVFQGTVESISMKKPKERTQFFEEISTSGEFIGEYEAKKKKLQKAEEDAQFHFNVKKNVAAERKHAKIEKEEAEHYQNLLEELKINKIQLMLFQLYYNEEKINVLNTELEQMDGNLSVVKDTLSHHENIFKAKKKDYGMLTRQLQQTAKELKSVEAILNQKRPQYIKAKENTSHHLKKLDLSKKLITDNEKQCSKQEDGIRALVAELADLDRAWKSFEKQMEEKILQKGRDIELENSQLDRYKLLKEQVRRKVGIMTQQLEKLQWEQKAEKERLAFEKRRHGDTQGNLKQIKEQIEEHKKRIEKLEEYTKTCMDCLEDKKQQEEALKKEIENTKSRMSEVNEELSLIRNELQNAGIDNHEGKRQQKRAEVLEHLKRLYPDSVFGRLLDLCHPIHKKYQLAVTKLFGRYMVAIVVASEKIAKDCIRFLKAERAEPETFLALDYLDIKPINERLREIKGCKMMIDVIKTQFPQLKKVIQFVCGNGLVCETVEEARHIAFGGPERRKAVALDGTLFLKSGVISGGSSDLKHKALCWDEKELHNLRDKRSQLVQELKELMKTLRKETDLKQIQTLVQGTNTRLKYSQNELEMIKKKHLATFYREQSQLQSELLNIDSQCTMLSEGINKQQQKIEEFQDKIDEVEDDIFQDFCEEIGVENIREFENKHVKQQQENDQKRLEFEKQKTRLNIQLEYSRNQLKKKLNNIDTLKTTIQKGKEDIDNLKKTEEECLKIVEELMVKQEQIKEVLATQSSNIEKIHIQIEEERKKVLAVDREVGKLQKEVVIIQGSLEQKLLEKHNLLLDCKVQDIDISLVLGSLEDIIEMELTETESTQATADIYEKEASIQIDYSPLREDLKALQSDKEVEAHLTLLLQQVASQENTLLKTTAPNLRAQENLKTVRDKFQESADVFEASRKEARICRQEFEQVKRRRYDAFSQCFEHISVSIDQIYKKLCRNNSAQAFLSPENPEEPYLDGISYNCVAPGKRFMPMDNLSGGEKCVAALALLFAVHSFRPAPFFVLDEVDAALDNTNIGKVSSYIKEQSQEQFQMIIISLKEEFYSKADALIGVYPEHNECMFSHVLTLDLSKYPDTEDQEGSRSHRKPRVPRVSMSPKSPQSR</sequence>
<protein>
    <recommendedName>
        <fullName>Structural maintenance of chromosomes protein 1B</fullName>
        <shortName>SMC protein 1B</shortName>
        <shortName>SMC-1-beta</shortName>
        <shortName>SMC-1B</shortName>
    </recommendedName>
</protein>
<dbReference type="EMBL" id="AF303827">
    <property type="protein sequence ID" value="AAL09333.1"/>
    <property type="molecule type" value="mRNA"/>
</dbReference>
<dbReference type="CCDS" id="CCDS27718.1"/>
<dbReference type="RefSeq" id="NP_536718.1">
    <property type="nucleotide sequence ID" value="NM_080470.1"/>
</dbReference>
<dbReference type="SMR" id="Q920F6"/>
<dbReference type="BioGRID" id="228280">
    <property type="interactions" value="5"/>
</dbReference>
<dbReference type="CORUM" id="Q920F6"/>
<dbReference type="FunCoup" id="Q920F6">
    <property type="interactions" value="954"/>
</dbReference>
<dbReference type="IntAct" id="Q920F6">
    <property type="interactions" value="8"/>
</dbReference>
<dbReference type="MINT" id="Q920F6"/>
<dbReference type="STRING" id="10090.ENSMUSP00000023068"/>
<dbReference type="GlyGen" id="Q920F6">
    <property type="glycosylation" value="1 site, 1 O-linked glycan (1 site)"/>
</dbReference>
<dbReference type="iPTMnet" id="Q920F6"/>
<dbReference type="PhosphoSitePlus" id="Q920F6"/>
<dbReference type="SwissPalm" id="Q920F6"/>
<dbReference type="PaxDb" id="10090-ENSMUSP00000023068"/>
<dbReference type="ProteomicsDB" id="257204"/>
<dbReference type="Pumba" id="Q920F6"/>
<dbReference type="Antibodypedia" id="233">
    <property type="antibodies" value="122 antibodies from 22 providers"/>
</dbReference>
<dbReference type="DNASU" id="140557"/>
<dbReference type="Ensembl" id="ENSMUST00000023068.8">
    <property type="protein sequence ID" value="ENSMUSP00000023068.7"/>
    <property type="gene ID" value="ENSMUSG00000022432.8"/>
</dbReference>
<dbReference type="GeneID" id="140557"/>
<dbReference type="KEGG" id="mmu:140557"/>
<dbReference type="UCSC" id="uc007xcx.1">
    <property type="organism name" value="mouse"/>
</dbReference>
<dbReference type="AGR" id="MGI:2154049"/>
<dbReference type="CTD" id="27127"/>
<dbReference type="MGI" id="MGI:2154049">
    <property type="gene designation" value="Smc1b"/>
</dbReference>
<dbReference type="VEuPathDB" id="HostDB:ENSMUSG00000022432"/>
<dbReference type="eggNOG" id="KOG0018">
    <property type="taxonomic scope" value="Eukaryota"/>
</dbReference>
<dbReference type="GeneTree" id="ENSGT00940000157633"/>
<dbReference type="HOGENOM" id="CLU_001042_0_2_1"/>
<dbReference type="InParanoid" id="Q920F6"/>
<dbReference type="OMA" id="HKARCWD"/>
<dbReference type="OrthoDB" id="413649at2759"/>
<dbReference type="PhylomeDB" id="Q920F6"/>
<dbReference type="TreeFam" id="TF101156"/>
<dbReference type="BioGRID-ORCS" id="140557">
    <property type="hits" value="1 hit in 81 CRISPR screens"/>
</dbReference>
<dbReference type="ChiTaRS" id="Smc1b">
    <property type="organism name" value="mouse"/>
</dbReference>
<dbReference type="PRO" id="PR:Q920F6"/>
<dbReference type="Proteomes" id="UP000000589">
    <property type="component" value="Chromosome 15"/>
</dbReference>
<dbReference type="RNAct" id="Q920F6">
    <property type="molecule type" value="protein"/>
</dbReference>
<dbReference type="Bgee" id="ENSMUSG00000022432">
    <property type="expression patterns" value="Expressed in spermatid and 29 other cell types or tissues"/>
</dbReference>
<dbReference type="ExpressionAtlas" id="Q920F6">
    <property type="expression patterns" value="baseline and differential"/>
</dbReference>
<dbReference type="GO" id="GO:0000775">
    <property type="term" value="C:chromosome, centromeric region"/>
    <property type="evidence" value="ECO:0000314"/>
    <property type="project" value="MGI"/>
</dbReference>
<dbReference type="GO" id="GO:0000794">
    <property type="term" value="C:condensed nuclear chromosome"/>
    <property type="evidence" value="ECO:0000314"/>
    <property type="project" value="MGI"/>
</dbReference>
<dbReference type="GO" id="GO:0005829">
    <property type="term" value="C:cytosol"/>
    <property type="evidence" value="ECO:0007669"/>
    <property type="project" value="Ensembl"/>
</dbReference>
<dbReference type="GO" id="GO:0000800">
    <property type="term" value="C:lateral element"/>
    <property type="evidence" value="ECO:0000314"/>
    <property type="project" value="MGI"/>
</dbReference>
<dbReference type="GO" id="GO:0030893">
    <property type="term" value="C:meiotic cohesin complex"/>
    <property type="evidence" value="ECO:0000314"/>
    <property type="project" value="UniProtKB"/>
</dbReference>
<dbReference type="GO" id="GO:0005654">
    <property type="term" value="C:nucleoplasm"/>
    <property type="evidence" value="ECO:0000304"/>
    <property type="project" value="Reactome"/>
</dbReference>
<dbReference type="GO" id="GO:0000795">
    <property type="term" value="C:synaptonemal complex"/>
    <property type="evidence" value="ECO:0000314"/>
    <property type="project" value="MGI"/>
</dbReference>
<dbReference type="GO" id="GO:0005524">
    <property type="term" value="F:ATP binding"/>
    <property type="evidence" value="ECO:0007669"/>
    <property type="project" value="UniProtKB-KW"/>
</dbReference>
<dbReference type="GO" id="GO:0016887">
    <property type="term" value="F:ATP hydrolysis activity"/>
    <property type="evidence" value="ECO:0007669"/>
    <property type="project" value="InterPro"/>
</dbReference>
<dbReference type="GO" id="GO:0003677">
    <property type="term" value="F:DNA binding"/>
    <property type="evidence" value="ECO:0000314"/>
    <property type="project" value="MGI"/>
</dbReference>
<dbReference type="GO" id="GO:0051321">
    <property type="term" value="P:meiotic cell cycle"/>
    <property type="evidence" value="ECO:0000353"/>
    <property type="project" value="MGI"/>
</dbReference>
<dbReference type="GO" id="GO:0007062">
    <property type="term" value="P:sister chromatid cohesion"/>
    <property type="evidence" value="ECO:0000314"/>
    <property type="project" value="MGI"/>
</dbReference>
<dbReference type="CDD" id="cd03275">
    <property type="entry name" value="ABC_SMC1_euk"/>
    <property type="match status" value="2"/>
</dbReference>
<dbReference type="FunFam" id="1.20.1060.20:FF:000001">
    <property type="entry name" value="Structural maintenance of chromosomes 1A"/>
    <property type="match status" value="1"/>
</dbReference>
<dbReference type="FunFam" id="3.40.50.300:FF:000564">
    <property type="entry name" value="Structural maintenance of chromosomes 1A"/>
    <property type="match status" value="1"/>
</dbReference>
<dbReference type="FunFam" id="3.30.70.1620:FF:000001">
    <property type="entry name" value="Structural maintenance of chromosomes 1B"/>
    <property type="match status" value="1"/>
</dbReference>
<dbReference type="FunFam" id="3.40.50.300:FF:000562">
    <property type="entry name" value="Structural maintenance of chromosomes protein"/>
    <property type="match status" value="1"/>
</dbReference>
<dbReference type="Gene3D" id="1.20.1060.20">
    <property type="match status" value="1"/>
</dbReference>
<dbReference type="Gene3D" id="3.30.70.1620">
    <property type="match status" value="1"/>
</dbReference>
<dbReference type="Gene3D" id="3.40.50.300">
    <property type="entry name" value="P-loop containing nucleotide triphosphate hydrolases"/>
    <property type="match status" value="2"/>
</dbReference>
<dbReference type="InterPro" id="IPR027417">
    <property type="entry name" value="P-loop_NTPase"/>
</dbReference>
<dbReference type="InterPro" id="IPR003395">
    <property type="entry name" value="RecF/RecN/SMC_N"/>
</dbReference>
<dbReference type="InterPro" id="IPR024704">
    <property type="entry name" value="SMC"/>
</dbReference>
<dbReference type="InterPro" id="IPR028468">
    <property type="entry name" value="Smc1_ABC"/>
</dbReference>
<dbReference type="InterPro" id="IPR010935">
    <property type="entry name" value="SMC_hinge"/>
</dbReference>
<dbReference type="InterPro" id="IPR036277">
    <property type="entry name" value="SMC_hinge_sf"/>
</dbReference>
<dbReference type="PANTHER" id="PTHR18937:SF147">
    <property type="entry name" value="STRUCTURAL MAINTENANCE OF CHROMOSOMES PROTEIN 1B"/>
    <property type="match status" value="1"/>
</dbReference>
<dbReference type="PANTHER" id="PTHR18937">
    <property type="entry name" value="STRUCTURAL MAINTENANCE OF CHROMOSOMES SMC FAMILY MEMBER"/>
    <property type="match status" value="1"/>
</dbReference>
<dbReference type="Pfam" id="PF06470">
    <property type="entry name" value="SMC_hinge"/>
    <property type="match status" value="1"/>
</dbReference>
<dbReference type="Pfam" id="PF02463">
    <property type="entry name" value="SMC_N"/>
    <property type="match status" value="1"/>
</dbReference>
<dbReference type="PIRSF" id="PIRSF005719">
    <property type="entry name" value="SMC"/>
    <property type="match status" value="1"/>
</dbReference>
<dbReference type="SMART" id="SM00968">
    <property type="entry name" value="SMC_hinge"/>
    <property type="match status" value="1"/>
</dbReference>
<dbReference type="SUPFAM" id="SSF52540">
    <property type="entry name" value="P-loop containing nucleoside triphosphate hydrolases"/>
    <property type="match status" value="2"/>
</dbReference>
<dbReference type="SUPFAM" id="SSF75553">
    <property type="entry name" value="Smc hinge domain"/>
    <property type="match status" value="1"/>
</dbReference>
<name>SMC1B_MOUSE</name>
<keyword id="KW-0007">Acetylation</keyword>
<keyword id="KW-0067">ATP-binding</keyword>
<keyword id="KW-0131">Cell cycle</keyword>
<keyword id="KW-0137">Centromere</keyword>
<keyword id="KW-0158">Chromosome</keyword>
<keyword id="KW-0175">Coiled coil</keyword>
<keyword id="KW-0903">Direct protein sequencing</keyword>
<keyword id="KW-0469">Meiosis</keyword>
<keyword id="KW-0547">Nucleotide-binding</keyword>
<keyword id="KW-0539">Nucleus</keyword>
<keyword id="KW-1185">Reference proteome</keyword>
<accession>Q920F6</accession>
<reference key="1">
    <citation type="journal article" date="2001" name="Mol. Cell. Biol.">
        <title>Novel meiosis-specific isoform of mammalian SMC1.</title>
        <authorList>
            <person name="Revenkova E."/>
            <person name="Eijpe M."/>
            <person name="Heyting C."/>
            <person name="Gross B."/>
            <person name="Jessberger R."/>
        </authorList>
    </citation>
    <scope>NUCLEOTIDE SEQUENCE [MRNA]</scope>
    <scope>PARTIAL PROTEIN SEQUENCE</scope>
    <scope>FUNCTION</scope>
    <scope>INTERACTION WITH SMC3</scope>
    <scope>TISSUE SPECIFICITY</scope>
    <scope>SUBCELLULAR LOCATION</scope>
    <source>
        <tissue>Testis</tissue>
    </source>
</reference>
<reference key="2">
    <citation type="submission" date="2007-04" db="UniProtKB">
        <authorList>
            <person name="Lubec G."/>
            <person name="Kang S.U."/>
        </authorList>
    </citation>
    <scope>PROTEIN SEQUENCE OF 847-854</scope>
    <scope>IDENTIFICATION BY MASS SPECTROMETRY</scope>
    <source>
        <strain>C57BL/6J</strain>
        <tissue>Brain</tissue>
    </source>
</reference>
<reference key="3">
    <citation type="journal article" date="2004" name="Nat. Cell Biol.">
        <title>Cohesin SMC1 beta is required for meiotic chromosome dynamics, sister chromatid cohesion and DNA recombination.</title>
        <authorList>
            <person name="Revenkova E."/>
            <person name="Eijpe M."/>
            <person name="Heyting C."/>
            <person name="Hodges C.A."/>
            <person name="Hunt P.A."/>
            <person name="Liebe B."/>
            <person name="Scherthan H."/>
            <person name="Jessberger R."/>
        </authorList>
    </citation>
    <scope>FUNCTION</scope>
</reference>
<reference key="4">
    <citation type="journal article" date="2010" name="Cell">
        <title>A tissue-specific atlas of mouse protein phosphorylation and expression.</title>
        <authorList>
            <person name="Huttlin E.L."/>
            <person name="Jedrychowski M.P."/>
            <person name="Elias J.E."/>
            <person name="Goswami T."/>
            <person name="Rad R."/>
            <person name="Beausoleil S.A."/>
            <person name="Villen J."/>
            <person name="Haas W."/>
            <person name="Sowa M.E."/>
            <person name="Gygi S.P."/>
        </authorList>
    </citation>
    <scope>IDENTIFICATION BY MASS SPECTROMETRY [LARGE SCALE ANALYSIS]</scope>
    <source>
        <tissue>Testis</tissue>
    </source>
</reference>
<reference key="5">
    <citation type="journal article" date="2014" name="Chromosoma">
        <title>Localisation of the SMC loading complex Nipbl/Mau2 during mammalian meiotic prophase I.</title>
        <authorList>
            <person name="Visnes T."/>
            <person name="Giordano F."/>
            <person name="Kuznetsova A."/>
            <person name="Suja J.A."/>
            <person name="Lander A.D."/>
            <person name="Calof A.L."/>
            <person name="Stroem L."/>
        </authorList>
    </citation>
    <scope>SUBCELLULAR LOCATION</scope>
    <scope>TISSUE SPECIFICITY</scope>
</reference>
<feature type="chain" id="PRO_0000118994" description="Structural maintenance of chromosomes protein 1B">
    <location>
        <begin position="1"/>
        <end position="1248"/>
    </location>
</feature>
<feature type="domain" description="SMC hinge">
    <location>
        <begin position="514"/>
        <end position="629"/>
    </location>
</feature>
<feature type="region of interest" description="Disordered" evidence="5">
    <location>
        <begin position="1219"/>
        <end position="1248"/>
    </location>
</feature>
<feature type="coiled-coil region" evidence="4">
    <location>
        <begin position="163"/>
        <end position="502"/>
    </location>
</feature>
<feature type="coiled-coil region" evidence="4">
    <location>
        <begin position="666"/>
        <end position="912"/>
    </location>
</feature>
<feature type="compositionally biased region" description="Basic and acidic residues" evidence="5">
    <location>
        <begin position="1219"/>
        <end position="1228"/>
    </location>
</feature>
<feature type="binding site" evidence="4">
    <location>
        <begin position="32"/>
        <end position="39"/>
    </location>
    <ligand>
        <name>ATP</name>
        <dbReference type="ChEBI" id="CHEBI:30616"/>
    </ligand>
</feature>
<feature type="modified residue" description="N6-acetyllysine" evidence="2">
    <location>
        <position position="648"/>
    </location>
</feature>
<feature type="modified residue" description="N6-acetyllysine" evidence="2">
    <location>
        <position position="713"/>
    </location>
</feature>
<feature type="modified residue" description="N6-acetyllysine" evidence="3">
    <location>
        <position position="1032"/>
    </location>
</feature>
<proteinExistence type="evidence at protein level"/>
<evidence type="ECO:0000250" key="1"/>
<evidence type="ECO:0000250" key="2">
    <source>
        <dbReference type="UniProtKB" id="Q14683"/>
    </source>
</evidence>
<evidence type="ECO:0000250" key="3">
    <source>
        <dbReference type="UniProtKB" id="Q9CU62"/>
    </source>
</evidence>
<evidence type="ECO:0000255" key="4"/>
<evidence type="ECO:0000256" key="5">
    <source>
        <dbReference type="SAM" id="MobiDB-lite"/>
    </source>
</evidence>
<evidence type="ECO:0000269" key="6">
    <source>
    </source>
</evidence>
<evidence type="ECO:0000269" key="7">
    <source>
    </source>
</evidence>
<evidence type="ECO:0000269" key="8">
    <source>
    </source>
</evidence>
<evidence type="ECO:0000305" key="9"/>
<gene>
    <name type="primary">Smc1b</name>
    <name type="synonym">Smc1l2</name>
</gene>
<organism>
    <name type="scientific">Mus musculus</name>
    <name type="common">Mouse</name>
    <dbReference type="NCBI Taxonomy" id="10090"/>
    <lineage>
        <taxon>Eukaryota</taxon>
        <taxon>Metazoa</taxon>
        <taxon>Chordata</taxon>
        <taxon>Craniata</taxon>
        <taxon>Vertebrata</taxon>
        <taxon>Euteleostomi</taxon>
        <taxon>Mammalia</taxon>
        <taxon>Eutheria</taxon>
        <taxon>Euarchontoglires</taxon>
        <taxon>Glires</taxon>
        <taxon>Rodentia</taxon>
        <taxon>Myomorpha</taxon>
        <taxon>Muroidea</taxon>
        <taxon>Muridae</taxon>
        <taxon>Murinae</taxon>
        <taxon>Mus</taxon>
        <taxon>Mus</taxon>
    </lineage>
</organism>
<comment type="function">
    <text evidence="6 7">Meiosis-specific component of cohesin complex. Required for the maintenance of meiotic cohesion, but not, or only to a minor extent, for its establishment. Contributes to axial element (AE) formation and the organization of chromatin loops along the AE. Plays a key role in synapsis, recombination and chromosome movements. The cohesin complex is required for the cohesion of sister chromatids after DNA replication. The cohesin complex apparently forms a large proteinaceous ring within which sister chromatids can be trapped. At anaphase, the complex is cleaved and dissociates from chromatin, allowing sister chromatids to segregate. The meiosis-specific cohesin complex probably replaces mitosis specific cohesin complex when it dissociates from chromatin during prophase I.</text>
</comment>
<comment type="subunit">
    <text evidence="2 6">Forms a heterodimer with SMC3. Component of a meiosis-specific cohesin complex, probably composed of the SMC1B and SMC3 heterodimer attached via their SMC hinge domain, RAD21 (or its meiosis-specific related protein REC8), which link them, and STAG3, which interacts with RAD21 or REC8. The cohesin complex interacts with the cohesin loading complex subunits NIPBL/Scc2 (via HEAT repeats) and MAU2/Scc4. NIPBL directly contacts all members of the complex, RAD21, SMC1A/B, SMC3 and STAG1 (By similarity).</text>
</comment>
<comment type="subcellular location">
    <subcellularLocation>
        <location evidence="6">Nucleus</location>
    </subcellularLocation>
    <subcellularLocation>
        <location evidence="6 8">Chromosome</location>
    </subcellularLocation>
    <subcellularLocation>
        <location evidence="6">Chromosome</location>
        <location evidence="6">Centromere</location>
    </subcellularLocation>
    <text evidence="6">Associates with chromatin. In prophase I stage of meiosis, localizes along the AE of synaptonemal complexes. In late-pachytene-diplotene, the bulk of protein dissociates from the chromosome arms probably because of phosphorylation by PLK, except at centromeres, where cohesin complexes remain. Remains chromatin associated at the centromeres up to metaphase II. At anaphase II, dissociates from centromeres, allowing chromosomes segregation.</text>
</comment>
<comment type="tissue specificity">
    <text evidence="6 8">Spermatocytes (at protein level). Testis and ovary specific. Not expressed in somatic cells.</text>
</comment>
<comment type="domain">
    <text evidence="1">The flexible SMC hinge domain, which separates the large intramolecular coiled coil regions, allows the heterotypic interaction with the corresponding domain of SMC3, forming a V-shaped heterodimer. The two heads of the heterodimer are then connected by different ends of the cleavable RAD21 or REC8 protein, forming a ring structure (By similarity).</text>
</comment>
<comment type="similarity">
    <text evidence="9">Belongs to the SMC family. SMC1 subfamily.</text>
</comment>